<comment type="function">
    <text evidence="1">Prevents the cell division inhibition by proteins MinC and MinD at internal division sites while permitting inhibition at polar sites. This ensures cell division at the proper site by restricting the formation of a division septum at the midpoint of the long axis of the cell.</text>
</comment>
<comment type="similarity">
    <text evidence="1">Belongs to the MinE family.</text>
</comment>
<organism>
    <name type="scientific">Escherichia coli (strain SE11)</name>
    <dbReference type="NCBI Taxonomy" id="409438"/>
    <lineage>
        <taxon>Bacteria</taxon>
        <taxon>Pseudomonadati</taxon>
        <taxon>Pseudomonadota</taxon>
        <taxon>Gammaproteobacteria</taxon>
        <taxon>Enterobacterales</taxon>
        <taxon>Enterobacteriaceae</taxon>
        <taxon>Escherichia</taxon>
    </lineage>
</organism>
<name>MINE_ECOSE</name>
<gene>
    <name evidence="1" type="primary">minE</name>
    <name type="ordered locus">ECSE_1220</name>
</gene>
<dbReference type="EMBL" id="AP009240">
    <property type="protein sequence ID" value="BAG76744.1"/>
    <property type="molecule type" value="Genomic_DNA"/>
</dbReference>
<dbReference type="RefSeq" id="WP_001185665.1">
    <property type="nucleotide sequence ID" value="NC_011415.1"/>
</dbReference>
<dbReference type="SMR" id="B6I9N3"/>
<dbReference type="GeneID" id="93776260"/>
<dbReference type="KEGG" id="ecy:ECSE_1220"/>
<dbReference type="HOGENOM" id="CLU_137929_2_2_6"/>
<dbReference type="Proteomes" id="UP000008199">
    <property type="component" value="Chromosome"/>
</dbReference>
<dbReference type="GO" id="GO:0051301">
    <property type="term" value="P:cell division"/>
    <property type="evidence" value="ECO:0007669"/>
    <property type="project" value="UniProtKB-KW"/>
</dbReference>
<dbReference type="GO" id="GO:0032955">
    <property type="term" value="P:regulation of division septum assembly"/>
    <property type="evidence" value="ECO:0007669"/>
    <property type="project" value="InterPro"/>
</dbReference>
<dbReference type="FunFam" id="3.30.1070.10:FF:000001">
    <property type="entry name" value="Cell division topological specificity factor"/>
    <property type="match status" value="1"/>
</dbReference>
<dbReference type="Gene3D" id="3.30.1070.10">
    <property type="entry name" value="Cell division topological specificity factor MinE"/>
    <property type="match status" value="1"/>
</dbReference>
<dbReference type="HAMAP" id="MF_00262">
    <property type="entry name" value="MinE"/>
    <property type="match status" value="1"/>
</dbReference>
<dbReference type="InterPro" id="IPR005527">
    <property type="entry name" value="MinE"/>
</dbReference>
<dbReference type="InterPro" id="IPR036707">
    <property type="entry name" value="MinE_sf"/>
</dbReference>
<dbReference type="NCBIfam" id="TIGR01215">
    <property type="entry name" value="minE"/>
    <property type="match status" value="1"/>
</dbReference>
<dbReference type="NCBIfam" id="NF001422">
    <property type="entry name" value="PRK00296.1"/>
    <property type="match status" value="1"/>
</dbReference>
<dbReference type="Pfam" id="PF03776">
    <property type="entry name" value="MinE"/>
    <property type="match status" value="1"/>
</dbReference>
<dbReference type="SUPFAM" id="SSF55229">
    <property type="entry name" value="Cell division protein MinE topological specificity domain"/>
    <property type="match status" value="1"/>
</dbReference>
<sequence>MALLDFFLSRKKNTANIAKERLQIIVAERRRSDAEPHYLPQLRKDILEVICKYVQIDPEMVTVQLEQKDGDISILELNVTLPEAEELK</sequence>
<reference key="1">
    <citation type="journal article" date="2008" name="DNA Res.">
        <title>Complete genome sequence and comparative analysis of the wild-type commensal Escherichia coli strain SE11 isolated from a healthy adult.</title>
        <authorList>
            <person name="Oshima K."/>
            <person name="Toh H."/>
            <person name="Ogura Y."/>
            <person name="Sasamoto H."/>
            <person name="Morita H."/>
            <person name="Park S.-H."/>
            <person name="Ooka T."/>
            <person name="Iyoda S."/>
            <person name="Taylor T.D."/>
            <person name="Hayashi T."/>
            <person name="Itoh K."/>
            <person name="Hattori M."/>
        </authorList>
    </citation>
    <scope>NUCLEOTIDE SEQUENCE [LARGE SCALE GENOMIC DNA]</scope>
    <source>
        <strain>SE11</strain>
    </source>
</reference>
<accession>B6I9N3</accession>
<keyword id="KW-0131">Cell cycle</keyword>
<keyword id="KW-0132">Cell division</keyword>
<feature type="chain" id="PRO_1000114220" description="Cell division topological specificity factor">
    <location>
        <begin position="1"/>
        <end position="88"/>
    </location>
</feature>
<proteinExistence type="inferred from homology"/>
<evidence type="ECO:0000255" key="1">
    <source>
        <dbReference type="HAMAP-Rule" id="MF_00262"/>
    </source>
</evidence>
<protein>
    <recommendedName>
        <fullName evidence="1">Cell division topological specificity factor</fullName>
    </recommendedName>
</protein>